<sequence length="454" mass="52257">MHGPTSKAISRNVRSVKRPRRAPRPVVSTQAMNKLSNVTLSAEQEKLRERVLSFMRSNLSQYKSDWKHPAMFVIQGDAGTGKSVILNSLFNEIQKLSQFSPSSEDILHGTHNYLVVNHPEMLKLYIRISDSFKYISKSSLERPTSLINNLQKRKVMADVVIVDEAHLLATSKDAFKRFYGENHLKDLMSLCKVLVLVYDDKQALRMGSYWDEGSNNGATLKDFYNEIPPKSRDWYTLKQQFRVAAPQNVLNWIDQISVAGKIPPIESVLSKGNADCADDKIKNFDFKIWDDCGAMYEAIKEKDRQYGQCRMLSTYDFPYRLDGKDYYVECGDNFKVRWDRYTPREVTPWSERCDTIDEVGSVYTIQGFDLNYAGVILGRSIGYDAANDCIKLRPELYDDRAGFTKKKNIHNAEDVKQKIIMNSINVLLTRGVRGLYVYAYDPELRERLLRPSKK</sequence>
<proteinExistence type="evidence at protein level"/>
<feature type="chain" id="PRO_0000242145" description="Uncharacterized protein YPL245W">
    <location>
        <begin position="1"/>
        <end position="454"/>
    </location>
</feature>
<feature type="region of interest" description="Disordered" evidence="1">
    <location>
        <begin position="1"/>
        <end position="25"/>
    </location>
</feature>
<feature type="compositionally biased region" description="Basic residues" evidence="1">
    <location>
        <begin position="14"/>
        <end position="23"/>
    </location>
</feature>
<reference key="1">
    <citation type="journal article" date="1997" name="Nature">
        <title>The nucleotide sequence of Saccharomyces cerevisiae chromosome XVI.</title>
        <authorList>
            <person name="Bussey H."/>
            <person name="Storms R.K."/>
            <person name="Ahmed A."/>
            <person name="Albermann K."/>
            <person name="Allen E."/>
            <person name="Ansorge W."/>
            <person name="Araujo R."/>
            <person name="Aparicio A."/>
            <person name="Barrell B.G."/>
            <person name="Badcock K."/>
            <person name="Benes V."/>
            <person name="Botstein D."/>
            <person name="Bowman S."/>
            <person name="Brueckner M."/>
            <person name="Carpenter J."/>
            <person name="Cherry J.M."/>
            <person name="Chung E."/>
            <person name="Churcher C.M."/>
            <person name="Coster F."/>
            <person name="Davis K."/>
            <person name="Davis R.W."/>
            <person name="Dietrich F.S."/>
            <person name="Delius H."/>
            <person name="DiPaolo T."/>
            <person name="Dubois E."/>
            <person name="Duesterhoeft A."/>
            <person name="Duncan M."/>
            <person name="Floeth M."/>
            <person name="Fortin N."/>
            <person name="Friesen J.D."/>
            <person name="Fritz C."/>
            <person name="Goffeau A."/>
            <person name="Hall J."/>
            <person name="Hebling U."/>
            <person name="Heumann K."/>
            <person name="Hilbert H."/>
            <person name="Hillier L.W."/>
            <person name="Hunicke-Smith S."/>
            <person name="Hyman R.W."/>
            <person name="Johnston M."/>
            <person name="Kalman S."/>
            <person name="Kleine K."/>
            <person name="Komp C."/>
            <person name="Kurdi O."/>
            <person name="Lashkari D."/>
            <person name="Lew H."/>
            <person name="Lin A."/>
            <person name="Lin D."/>
            <person name="Louis E.J."/>
            <person name="Marathe R."/>
            <person name="Messenguy F."/>
            <person name="Mewes H.-W."/>
            <person name="Mirtipati S."/>
            <person name="Moestl D."/>
            <person name="Mueller-Auer S."/>
            <person name="Namath A."/>
            <person name="Nentwich U."/>
            <person name="Oefner P."/>
            <person name="Pearson D."/>
            <person name="Petel F.X."/>
            <person name="Pohl T.M."/>
            <person name="Purnelle B."/>
            <person name="Rajandream M.A."/>
            <person name="Rechmann S."/>
            <person name="Rieger M."/>
            <person name="Riles L."/>
            <person name="Roberts D."/>
            <person name="Schaefer M."/>
            <person name="Scharfe M."/>
            <person name="Scherens B."/>
            <person name="Schramm S."/>
            <person name="Schroeder M."/>
            <person name="Sdicu A.-M."/>
            <person name="Tettelin H."/>
            <person name="Urrestarazu L.A."/>
            <person name="Ushinsky S."/>
            <person name="Vierendeels F."/>
            <person name="Vissers S."/>
            <person name="Voss H."/>
            <person name="Walsh S.V."/>
            <person name="Wambutt R."/>
            <person name="Wang Y."/>
            <person name="Wedler E."/>
            <person name="Wedler H."/>
            <person name="Winnett E."/>
            <person name="Zhong W.-W."/>
            <person name="Zollner A."/>
            <person name="Vo D.H."/>
            <person name="Hani J."/>
        </authorList>
    </citation>
    <scope>NUCLEOTIDE SEQUENCE [LARGE SCALE GENOMIC DNA]</scope>
    <source>
        <strain>ATCC 204508 / S288c</strain>
    </source>
</reference>
<reference key="2">
    <citation type="journal article" date="2014" name="G3 (Bethesda)">
        <title>The reference genome sequence of Saccharomyces cerevisiae: Then and now.</title>
        <authorList>
            <person name="Engel S.R."/>
            <person name="Dietrich F.S."/>
            <person name="Fisk D.G."/>
            <person name="Binkley G."/>
            <person name="Balakrishnan R."/>
            <person name="Costanzo M.C."/>
            <person name="Dwight S.S."/>
            <person name="Hitz B.C."/>
            <person name="Karra K."/>
            <person name="Nash R.S."/>
            <person name="Weng S."/>
            <person name="Wong E.D."/>
            <person name="Lloyd P."/>
            <person name="Skrzypek M.S."/>
            <person name="Miyasato S.R."/>
            <person name="Simison M."/>
            <person name="Cherry J.M."/>
        </authorList>
    </citation>
    <scope>GENOME REANNOTATION</scope>
    <source>
        <strain>ATCC 204508 / S288c</strain>
    </source>
</reference>
<reference key="3">
    <citation type="journal article" date="2003" name="Nature">
        <title>Global analysis of protein localization in budding yeast.</title>
        <authorList>
            <person name="Huh W.-K."/>
            <person name="Falvo J.V."/>
            <person name="Gerke L.C."/>
            <person name="Carroll A.S."/>
            <person name="Howson R.W."/>
            <person name="Weissman J.S."/>
            <person name="O'Shea E.K."/>
        </authorList>
    </citation>
    <scope>SUBCELLULAR LOCATION [LARGE SCALE ANALYSIS]</scope>
</reference>
<reference key="4">
    <citation type="journal article" date="2003" name="Nature">
        <title>Global analysis of protein expression in yeast.</title>
        <authorList>
            <person name="Ghaemmaghami S."/>
            <person name="Huh W.-K."/>
            <person name="Bower K."/>
            <person name="Howson R.W."/>
            <person name="Belle A."/>
            <person name="Dephoure N."/>
            <person name="O'Shea E.K."/>
            <person name="Weissman J.S."/>
        </authorList>
    </citation>
    <scope>LEVEL OF PROTEIN EXPRESSION [LARGE SCALE ANALYSIS]</scope>
</reference>
<reference key="5">
    <citation type="journal article" date="2012" name="Proc. Natl. Acad. Sci. U.S.A.">
        <title>N-terminal acetylome analyses and functional insights of the N-terminal acetyltransferase NatB.</title>
        <authorList>
            <person name="Van Damme P."/>
            <person name="Lasa M."/>
            <person name="Polevoda B."/>
            <person name="Gazquez C."/>
            <person name="Elosegui-Artola A."/>
            <person name="Kim D.S."/>
            <person name="De Juan-Pardo E."/>
            <person name="Demeyer K."/>
            <person name="Hole K."/>
            <person name="Larrea E."/>
            <person name="Timmerman E."/>
            <person name="Prieto J."/>
            <person name="Arnesen T."/>
            <person name="Sherman F."/>
            <person name="Gevaert K."/>
            <person name="Aldabe R."/>
        </authorList>
    </citation>
    <scope>IDENTIFICATION BY MASS SPECTROMETRY [LARGE SCALE ANALYSIS]</scope>
</reference>
<keyword id="KW-0963">Cytoplasm</keyword>
<keyword id="KW-0539">Nucleus</keyword>
<keyword id="KW-1185">Reference proteome</keyword>
<evidence type="ECO:0000256" key="1">
    <source>
        <dbReference type="SAM" id="MobiDB-lite"/>
    </source>
</evidence>
<evidence type="ECO:0000269" key="2">
    <source>
    </source>
</evidence>
<evidence type="ECO:0000269" key="3">
    <source>
    </source>
</evidence>
<dbReference type="EMBL" id="Z67751">
    <property type="protein sequence ID" value="CAA91599.1"/>
    <property type="molecule type" value="Genomic_DNA"/>
</dbReference>
<dbReference type="EMBL" id="Z73601">
    <property type="protein sequence ID" value="CAA97966.1"/>
    <property type="molecule type" value="Genomic_DNA"/>
</dbReference>
<dbReference type="EMBL" id="BK006949">
    <property type="protein sequence ID" value="DAA11192.1"/>
    <property type="molecule type" value="Genomic_DNA"/>
</dbReference>
<dbReference type="PIR" id="S61019">
    <property type="entry name" value="S61019"/>
</dbReference>
<dbReference type="RefSeq" id="NP_015079.1">
    <property type="nucleotide sequence ID" value="NM_001184059.1"/>
</dbReference>
<dbReference type="BioGRID" id="35918">
    <property type="interactions" value="89"/>
</dbReference>
<dbReference type="DIP" id="DIP-3957N"/>
<dbReference type="FunCoup" id="Q12179">
    <property type="interactions" value="75"/>
</dbReference>
<dbReference type="IntAct" id="Q12179">
    <property type="interactions" value="4"/>
</dbReference>
<dbReference type="MINT" id="Q12179"/>
<dbReference type="STRING" id="4932.YPL245W"/>
<dbReference type="iPTMnet" id="Q12179"/>
<dbReference type="PaxDb" id="4932-YPL245W"/>
<dbReference type="PeptideAtlas" id="Q12179"/>
<dbReference type="EnsemblFungi" id="YPL245W_mRNA">
    <property type="protein sequence ID" value="YPL245W"/>
    <property type="gene ID" value="YPL245W"/>
</dbReference>
<dbReference type="GeneID" id="855831"/>
<dbReference type="KEGG" id="sce:YPL245W"/>
<dbReference type="AGR" id="SGD:S000006166"/>
<dbReference type="SGD" id="S000006166">
    <property type="gene designation" value="YPL245W"/>
</dbReference>
<dbReference type="VEuPathDB" id="FungiDB:YPL245W"/>
<dbReference type="eggNOG" id="ENOG502QRC1">
    <property type="taxonomic scope" value="Eukaryota"/>
</dbReference>
<dbReference type="HOGENOM" id="CLU_009521_0_0_1"/>
<dbReference type="InParanoid" id="Q12179"/>
<dbReference type="OMA" id="LRMGSYW"/>
<dbReference type="OrthoDB" id="411123at2759"/>
<dbReference type="BioCyc" id="YEAST:G3O-34131-MONOMER"/>
<dbReference type="BioGRID-ORCS" id="855831">
    <property type="hits" value="2 hits in 10 CRISPR screens"/>
</dbReference>
<dbReference type="PRO" id="PR:Q12179"/>
<dbReference type="Proteomes" id="UP000002311">
    <property type="component" value="Chromosome XVI"/>
</dbReference>
<dbReference type="RNAct" id="Q12179">
    <property type="molecule type" value="protein"/>
</dbReference>
<dbReference type="GO" id="GO:0005737">
    <property type="term" value="C:cytoplasm"/>
    <property type="evidence" value="ECO:0007005"/>
    <property type="project" value="SGD"/>
</dbReference>
<dbReference type="GO" id="GO:0005634">
    <property type="term" value="C:nucleus"/>
    <property type="evidence" value="ECO:0007005"/>
    <property type="project" value="SGD"/>
</dbReference>
<dbReference type="FunFam" id="3.40.50.300:FF:002321">
    <property type="entry name" value="YPL245W-like protein"/>
    <property type="match status" value="1"/>
</dbReference>
<dbReference type="Gene3D" id="3.40.50.300">
    <property type="entry name" value="P-loop containing nucleotide triphosphate hydrolases"/>
    <property type="match status" value="1"/>
</dbReference>
<dbReference type="InterPro" id="IPR027417">
    <property type="entry name" value="P-loop_NTPase"/>
</dbReference>
<dbReference type="InterPro" id="IPR018647">
    <property type="entry name" value="SLFN_3-like_DNA/RNA_helicase"/>
</dbReference>
<dbReference type="Pfam" id="PF09848">
    <property type="entry name" value="SLFN-g3_helicase"/>
    <property type="match status" value="1"/>
</dbReference>
<dbReference type="SUPFAM" id="SSF52540">
    <property type="entry name" value="P-loop containing nucleoside triphosphate hydrolases"/>
    <property type="match status" value="1"/>
</dbReference>
<organism>
    <name type="scientific">Saccharomyces cerevisiae (strain ATCC 204508 / S288c)</name>
    <name type="common">Baker's yeast</name>
    <dbReference type="NCBI Taxonomy" id="559292"/>
    <lineage>
        <taxon>Eukaryota</taxon>
        <taxon>Fungi</taxon>
        <taxon>Dikarya</taxon>
        <taxon>Ascomycota</taxon>
        <taxon>Saccharomycotina</taxon>
        <taxon>Saccharomycetes</taxon>
        <taxon>Saccharomycetales</taxon>
        <taxon>Saccharomycetaceae</taxon>
        <taxon>Saccharomyces</taxon>
    </lineage>
</organism>
<name>YP245_YEAST</name>
<protein>
    <recommendedName>
        <fullName>Uncharacterized protein YPL245W</fullName>
    </recommendedName>
</protein>
<gene>
    <name type="ordered locus">YPL245W</name>
</gene>
<comment type="subcellular location">
    <subcellularLocation>
        <location evidence="2">Cytoplasm</location>
    </subcellularLocation>
    <subcellularLocation>
        <location evidence="2">Nucleus</location>
    </subcellularLocation>
</comment>
<comment type="miscellaneous">
    <text evidence="3">Present with 1130 molecules/cell in log phase SD medium.</text>
</comment>
<accession>Q12179</accession>
<accession>D6W3C6</accession>